<keyword id="KW-1185">Reference proteome</keyword>
<proteinExistence type="inferred from homology"/>
<dbReference type="EMBL" id="FO081380">
    <property type="protein sequence ID" value="CCD71194.1"/>
    <property type="molecule type" value="Genomic_DNA"/>
</dbReference>
<dbReference type="PIR" id="S44852">
    <property type="entry name" value="S44852"/>
</dbReference>
<dbReference type="SMR" id="P34523"/>
<dbReference type="FunCoup" id="P34523">
    <property type="interactions" value="140"/>
</dbReference>
<dbReference type="STRING" id="6239.K12H4.2.1"/>
<dbReference type="PaxDb" id="6239-K12H4.2"/>
<dbReference type="PeptideAtlas" id="P34523"/>
<dbReference type="EnsemblMetazoa" id="K12H4.2.1">
    <property type="protein sequence ID" value="K12H4.2.1"/>
    <property type="gene ID" value="WBGene00019677"/>
</dbReference>
<dbReference type="KEGG" id="cel:CELE_K12H4.2"/>
<dbReference type="UCSC" id="K12H4.2">
    <property type="organism name" value="c. elegans"/>
</dbReference>
<dbReference type="AGR" id="WB:WBGene00019677"/>
<dbReference type="CTD" id="176135"/>
<dbReference type="WormBase" id="K12H4.2">
    <property type="protein sequence ID" value="CE38528"/>
    <property type="gene ID" value="WBGene00019677"/>
    <property type="gene designation" value="mals-1"/>
</dbReference>
<dbReference type="eggNOG" id="KOG3212">
    <property type="taxonomic scope" value="Eukaryota"/>
</dbReference>
<dbReference type="HOGENOM" id="CLU_1449000_0_0_1"/>
<dbReference type="InParanoid" id="P34523"/>
<dbReference type="OMA" id="GWYVSEV"/>
<dbReference type="OrthoDB" id="271386at2759"/>
<dbReference type="PhylomeDB" id="P34523"/>
<dbReference type="PRO" id="PR:P34523"/>
<dbReference type="Proteomes" id="UP000001940">
    <property type="component" value="Chromosome III"/>
</dbReference>
<dbReference type="Bgee" id="WBGene00019677">
    <property type="expression patterns" value="Expressed in adult organism and 4 other cell types or tissues"/>
</dbReference>
<dbReference type="GO" id="GO:0005739">
    <property type="term" value="C:mitochondrion"/>
    <property type="evidence" value="ECO:0000318"/>
    <property type="project" value="GO_Central"/>
</dbReference>
<dbReference type="GO" id="GO:0043023">
    <property type="term" value="F:ribosomal large subunit binding"/>
    <property type="evidence" value="ECO:0000318"/>
    <property type="project" value="GO_Central"/>
</dbReference>
<dbReference type="GO" id="GO:0036498">
    <property type="term" value="P:IRE1-mediated unfolded protein response"/>
    <property type="evidence" value="ECO:0007007"/>
    <property type="project" value="WormBase"/>
</dbReference>
<dbReference type="GO" id="GO:0090071">
    <property type="term" value="P:negative regulation of ribosome biogenesis"/>
    <property type="evidence" value="ECO:0000318"/>
    <property type="project" value="GO_Central"/>
</dbReference>
<dbReference type="GO" id="GO:0017148">
    <property type="term" value="P:negative regulation of translation"/>
    <property type="evidence" value="ECO:0000318"/>
    <property type="project" value="GO_Central"/>
</dbReference>
<dbReference type="Gene3D" id="3.30.460.10">
    <property type="entry name" value="Beta Polymerase, domain 2"/>
    <property type="match status" value="1"/>
</dbReference>
<dbReference type="HAMAP" id="MF_01477">
    <property type="entry name" value="Iojap_RsfS"/>
    <property type="match status" value="1"/>
</dbReference>
<dbReference type="InterPro" id="IPR004394">
    <property type="entry name" value="Iojap/RsfS/C7orf30"/>
</dbReference>
<dbReference type="InterPro" id="IPR043519">
    <property type="entry name" value="NT_sf"/>
</dbReference>
<dbReference type="PANTHER" id="PTHR21043">
    <property type="entry name" value="IOJAP SUPERFAMILY ORTHOLOG"/>
    <property type="match status" value="1"/>
</dbReference>
<dbReference type="PANTHER" id="PTHR21043:SF0">
    <property type="entry name" value="MITOCHONDRIAL ASSEMBLY OF RIBOSOMAL LARGE SUBUNIT PROTEIN 1"/>
    <property type="match status" value="1"/>
</dbReference>
<dbReference type="Pfam" id="PF02410">
    <property type="entry name" value="RsfS"/>
    <property type="match status" value="1"/>
</dbReference>
<dbReference type="SUPFAM" id="SSF81301">
    <property type="entry name" value="Nucleotidyltransferase"/>
    <property type="match status" value="1"/>
</dbReference>
<feature type="chain" id="PRO_0000065411" description="Uncharacterized protein K12H4.2">
    <location>
        <begin position="1"/>
        <end position="190"/>
    </location>
</feature>
<reference key="1">
    <citation type="journal article" date="1994" name="Nature">
        <title>2.2 Mb of contiguous nucleotide sequence from chromosome III of C. elegans.</title>
        <authorList>
            <person name="Wilson R."/>
            <person name="Ainscough R."/>
            <person name="Anderson K."/>
            <person name="Baynes C."/>
            <person name="Berks M."/>
            <person name="Bonfield J."/>
            <person name="Burton J."/>
            <person name="Connell M."/>
            <person name="Copsey T."/>
            <person name="Cooper J."/>
            <person name="Coulson A."/>
            <person name="Craxton M."/>
            <person name="Dear S."/>
            <person name="Du Z."/>
            <person name="Durbin R."/>
            <person name="Favello A."/>
            <person name="Fraser A."/>
            <person name="Fulton L."/>
            <person name="Gardner A."/>
            <person name="Green P."/>
            <person name="Hawkins T."/>
            <person name="Hillier L."/>
            <person name="Jier M."/>
            <person name="Johnston L."/>
            <person name="Jones M."/>
            <person name="Kershaw J."/>
            <person name="Kirsten J."/>
            <person name="Laisster N."/>
            <person name="Latreille P."/>
            <person name="Lightning J."/>
            <person name="Lloyd C."/>
            <person name="Mortimore B."/>
            <person name="O'Callaghan M."/>
            <person name="Parsons J."/>
            <person name="Percy C."/>
            <person name="Rifken L."/>
            <person name="Roopra A."/>
            <person name="Saunders D."/>
            <person name="Shownkeen R."/>
            <person name="Sims M."/>
            <person name="Smaldon N."/>
            <person name="Smith A."/>
            <person name="Smith M."/>
            <person name="Sonnhammer E."/>
            <person name="Staden R."/>
            <person name="Sulston J."/>
            <person name="Thierry-Mieg J."/>
            <person name="Thomas K."/>
            <person name="Vaudin M."/>
            <person name="Vaughan K."/>
            <person name="Waterston R."/>
            <person name="Watson A."/>
            <person name="Weinstock L."/>
            <person name="Wilkinson-Sproat J."/>
            <person name="Wohldman P."/>
        </authorList>
    </citation>
    <scope>NUCLEOTIDE SEQUENCE [LARGE SCALE GENOMIC DNA]</scope>
    <source>
        <strain>Bristol N2</strain>
    </source>
</reference>
<reference key="2">
    <citation type="journal article" date="1998" name="Science">
        <title>Genome sequence of the nematode C. elegans: a platform for investigating biology.</title>
        <authorList>
            <consortium name="The C. elegans sequencing consortium"/>
        </authorList>
    </citation>
    <scope>NUCLEOTIDE SEQUENCE [LARGE SCALE GENOMIC DNA]</scope>
    <source>
        <strain>Bristol N2</strain>
    </source>
</reference>
<sequence length="190" mass="21960">MLTRFTRLRPILQLRYLAQNSHIEEEYFEELEPTGIISSHETSQEPPKRTGFRSQNLSEDADFVENVVGALTDQRAKDVFVVKSEETEMTPYTHKIICSAFNSRQASAISENLRSLLKIDGVSNGSMSHARRSTKRSNGWYVSEVERVQVHVMSEECREKYDLEAIWAGDDRILDEIDEEKQKILLPPRR</sequence>
<name>YM62_CAEEL</name>
<comment type="similarity">
    <text evidence="1">Belongs to the Iojap/RsfS family.</text>
</comment>
<evidence type="ECO:0000305" key="1"/>
<evidence type="ECO:0000312" key="2">
    <source>
        <dbReference type="WormBase" id="K12H4.2"/>
    </source>
</evidence>
<protein>
    <recommendedName>
        <fullName>Uncharacterized protein K12H4.2</fullName>
    </recommendedName>
</protein>
<organism>
    <name type="scientific">Caenorhabditis elegans</name>
    <dbReference type="NCBI Taxonomy" id="6239"/>
    <lineage>
        <taxon>Eukaryota</taxon>
        <taxon>Metazoa</taxon>
        <taxon>Ecdysozoa</taxon>
        <taxon>Nematoda</taxon>
        <taxon>Chromadorea</taxon>
        <taxon>Rhabditida</taxon>
        <taxon>Rhabditina</taxon>
        <taxon>Rhabditomorpha</taxon>
        <taxon>Rhabditoidea</taxon>
        <taxon>Rhabditidae</taxon>
        <taxon>Peloderinae</taxon>
        <taxon>Caenorhabditis</taxon>
    </lineage>
</organism>
<accession>P34523</accession>
<gene>
    <name evidence="2" type="primary">mals-1</name>
    <name evidence="2" type="ORF">K12H4.2</name>
</gene>